<evidence type="ECO:0000250" key="1">
    <source>
        <dbReference type="UniProtKB" id="Q7TMB3"/>
    </source>
</evidence>
<evidence type="ECO:0000255" key="2">
    <source>
        <dbReference type="PIRNR" id="PIRNR038207"/>
    </source>
</evidence>
<evidence type="ECO:0000255" key="3">
    <source>
        <dbReference type="PROSITE-ProRule" id="PRU00491"/>
    </source>
</evidence>
<evidence type="ECO:0000269" key="4">
    <source>
    </source>
</evidence>
<evidence type="ECO:0000303" key="5">
    <source>
    </source>
</evidence>
<evidence type="ECO:0000305" key="6"/>
<evidence type="ECO:0000312" key="7">
    <source>
        <dbReference type="EMBL" id="AGT20523.1"/>
    </source>
</evidence>
<proteinExistence type="evidence at transcript level"/>
<sequence>MPVDMAVQLYITSSPPLHHRFLSSYKDYRVRNLISVNCKPLRPCINTKNTHNTSLNPPCSVWKAPEPKAKKKVVFADSKGMSLTAVRVFSPCENKKSDSQVQFQLPKLEVALKPVQSRILAFRQPATEYMEFRKRLMKNSVCLESCTLQGHTLTGTIKVRNVSFEKSVQVRITFDSWENHRDIECTFLNDVCGCRDTDTFSFIIEIPACVLPQDSVEFCVSYTCGGKTHWDNNNGKNYALVTTHDEKKDKTKETDLLDPFRNQQKRNRFTADWNSLMIGIRGPTW</sequence>
<name>PPR3C_CLABA</name>
<dbReference type="EMBL" id="KC633817">
    <property type="protein sequence ID" value="AGT20523.1"/>
    <property type="molecule type" value="mRNA"/>
</dbReference>
<dbReference type="SMR" id="T1SFR8"/>
<dbReference type="GO" id="GO:0000164">
    <property type="term" value="C:protein phosphatase type 1 complex"/>
    <property type="evidence" value="ECO:0007669"/>
    <property type="project" value="TreeGrafter"/>
</dbReference>
<dbReference type="GO" id="GO:2001069">
    <property type="term" value="F:glycogen binding"/>
    <property type="evidence" value="ECO:0007669"/>
    <property type="project" value="TreeGrafter"/>
</dbReference>
<dbReference type="GO" id="GO:0008157">
    <property type="term" value="F:protein phosphatase 1 binding"/>
    <property type="evidence" value="ECO:0007669"/>
    <property type="project" value="TreeGrafter"/>
</dbReference>
<dbReference type="GO" id="GO:0019903">
    <property type="term" value="F:protein phosphatase binding"/>
    <property type="evidence" value="ECO:0000250"/>
    <property type="project" value="UniProtKB"/>
</dbReference>
<dbReference type="GO" id="GO:0071456">
    <property type="term" value="P:cellular response to hypoxia"/>
    <property type="evidence" value="ECO:0000270"/>
    <property type="project" value="UniProtKB"/>
</dbReference>
<dbReference type="GO" id="GO:0005978">
    <property type="term" value="P:glycogen biosynthetic process"/>
    <property type="evidence" value="ECO:0000250"/>
    <property type="project" value="UniProtKB"/>
</dbReference>
<dbReference type="GO" id="GO:0005977">
    <property type="term" value="P:glycogen metabolic process"/>
    <property type="evidence" value="ECO:0000250"/>
    <property type="project" value="UniProtKB"/>
</dbReference>
<dbReference type="GO" id="GO:0005979">
    <property type="term" value="P:regulation of glycogen biosynthetic process"/>
    <property type="evidence" value="ECO:0007669"/>
    <property type="project" value="TreeGrafter"/>
</dbReference>
<dbReference type="FunFam" id="2.60.40.2440:FF:000001">
    <property type="entry name" value="Protein phosphatase 1 regulatory subunit 3C"/>
    <property type="match status" value="1"/>
</dbReference>
<dbReference type="Gene3D" id="2.60.40.2440">
    <property type="entry name" value="Carbohydrate binding type-21 domain"/>
    <property type="match status" value="1"/>
</dbReference>
<dbReference type="InterPro" id="IPR005036">
    <property type="entry name" value="CBM21_dom"/>
</dbReference>
<dbReference type="InterPro" id="IPR038175">
    <property type="entry name" value="CBM21_dom_sf"/>
</dbReference>
<dbReference type="InterPro" id="IPR017434">
    <property type="entry name" value="Pase-1_reg-su_3B/C/D_met"/>
</dbReference>
<dbReference type="InterPro" id="IPR050782">
    <property type="entry name" value="PP1_regulatory_subunit_3"/>
</dbReference>
<dbReference type="PANTHER" id="PTHR12307">
    <property type="entry name" value="PROTEIN PHOSPHATASE 1 REGULATORY SUBUNIT"/>
    <property type="match status" value="1"/>
</dbReference>
<dbReference type="PANTHER" id="PTHR12307:SF15">
    <property type="entry name" value="PROTEIN PHOSPHATASE 1 REGULATORY SUBUNIT 3C"/>
    <property type="match status" value="1"/>
</dbReference>
<dbReference type="Pfam" id="PF03370">
    <property type="entry name" value="CBM_21"/>
    <property type="match status" value="1"/>
</dbReference>
<dbReference type="PIRSF" id="PIRSF038207">
    <property type="entry name" value="PP1_GT_animal"/>
    <property type="match status" value="1"/>
</dbReference>
<dbReference type="PROSITE" id="PS51159">
    <property type="entry name" value="CBM21"/>
    <property type="match status" value="1"/>
</dbReference>
<gene>
    <name evidence="5" type="primary">PPP1R3C</name>
</gene>
<accession>T1SFR8</accession>
<comment type="function">
    <text evidence="1">Acts as a glycogen-targeting subunit for PP1 and regulates its activity. Activates glycogen synthase, reduces glycogen phosphorylase activity and limits glycogen breakdown.</text>
</comment>
<comment type="subunit">
    <text evidence="1">Interacts with PPP1CC catalytic subunit of PP1 and associates with glycogen. Forms complexes with glycogen phosphorylase, glycogen synthase and phosphorylase kinase which is necessary for its regulation of PP1 activity.</text>
</comment>
<comment type="tissue specificity">
    <text evidence="4">Ubiquitously expressed in the examined tissues including brain, muscle, liver and spleen under normoxic condition. Its expression is higher in insulin sensitive tissues (liver and muscle) than in the brain and spleen. Significantly increased expression in the liver and muscle under short-term (1-12 hours) hypoxia exposure. Significantly increased expression after long-term (natural) hypoxia exposure in liver and spleen. No significant differences in expression in brain for any time periods.</text>
</comment>
<comment type="induction">
    <text evidence="4">Expression is up-regulated by hypoxia-inducible factor (HIF) under hypoxic conditions.</text>
</comment>
<comment type="domain">
    <text evidence="1">The N-terminal region is required for binding to PP1, the central region is required for binding to glycogen and the C-terminal region is required for binding to glycogen phosphorylase, glycogen synthase and phosphorylase kinase.</text>
</comment>
<reference evidence="7" key="1">
    <citation type="journal article" date="2013" name="Gene">
        <title>Molecular characterization and expression analysis of PPP1R3C in hypoxia-tolerant Indian catfish, Clarias batrachus (Linnaeus, 1758) under hypoxia.</title>
        <authorList>
            <person name="Mohindra V."/>
            <person name="Tripathi R.K."/>
            <person name="Singh R.K."/>
            <person name="Lal K.K."/>
        </authorList>
    </citation>
    <scope>NUCLEOTIDE SEQUENCE [MRNA]</scope>
    <scope>TISSUE SPECIFICITY</scope>
    <scope>INDUCTION</scope>
    <scope>PHYLOGENETIC ANALYSIS</scope>
</reference>
<feature type="chain" id="PRO_0000436337" description="Protein phosphatase 1 regulatory subunit 3C">
    <location>
        <begin position="1"/>
        <end position="285"/>
    </location>
</feature>
<feature type="domain" description="CBM21" evidence="3">
    <location>
        <begin position="133"/>
        <end position="241"/>
    </location>
</feature>
<feature type="short sequence motif" description="PP1-binding motif" evidence="6">
    <location>
        <begin position="72"/>
        <end position="75"/>
    </location>
</feature>
<protein>
    <recommendedName>
        <fullName evidence="2 5">Protein phosphatase 1 regulatory subunit 3C</fullName>
    </recommendedName>
</protein>
<keyword id="KW-0119">Carbohydrate metabolism</keyword>
<keyword id="KW-0321">Glycogen metabolism</keyword>
<organism evidence="7">
    <name type="scientific">Clarias batrachus</name>
    <name type="common">Walking catfish</name>
    <name type="synonym">Silurus batrachus</name>
    <dbReference type="NCBI Taxonomy" id="59899"/>
    <lineage>
        <taxon>Eukaryota</taxon>
        <taxon>Metazoa</taxon>
        <taxon>Chordata</taxon>
        <taxon>Craniata</taxon>
        <taxon>Vertebrata</taxon>
        <taxon>Euteleostomi</taxon>
        <taxon>Actinopterygii</taxon>
        <taxon>Neopterygii</taxon>
        <taxon>Teleostei</taxon>
        <taxon>Ostariophysi</taxon>
        <taxon>Siluriformes</taxon>
        <taxon>Clariidae</taxon>
        <taxon>Clarias</taxon>
    </lineage>
</organism>